<accession>Q5HU62</accession>
<sequence length="342" mass="38654">MTIALTGGGTGGHLAIVRCLLESAIKKNIECVYIGSQNGQDKAWFENEVRFKEKFFLSSKGVVNQSKFDKISSLLHTLKLSKDCREIFKKYHIQAVFSVGGYSAAPASFAALFSHLPLFIHEQNSKSGSLNMLLKPFATKFFSAFEKEISPYPVADKFFDNARIRKELKNIIFLGGSQGAQFINELALNLAPKLQEQNIKIIHQCGKNDFEKCKKHYQSLNIQADIFDFSLNLEEKMKNADLAISRAGASTLFELCANTLPAIFIPYPYAAKNHQYFNAKFLQDQALCQIFMQNSINLDEFFKSILKLNLENISTRLQNITQKNGADMLIQKALFDNLTFIR</sequence>
<dbReference type="EC" id="2.4.1.227" evidence="1"/>
<dbReference type="EMBL" id="CP000025">
    <property type="protein sequence ID" value="AAW35508.1"/>
    <property type="molecule type" value="Genomic_DNA"/>
</dbReference>
<dbReference type="RefSeq" id="WP_011049873.1">
    <property type="nucleotide sequence ID" value="NC_003912.7"/>
</dbReference>
<dbReference type="SMR" id="Q5HU62"/>
<dbReference type="CAZy" id="GT28">
    <property type="family name" value="Glycosyltransferase Family 28"/>
</dbReference>
<dbReference type="KEGG" id="cjr:CJE1183"/>
<dbReference type="HOGENOM" id="CLU_037404_2_1_7"/>
<dbReference type="UniPathway" id="UPA00219"/>
<dbReference type="GO" id="GO:0005886">
    <property type="term" value="C:plasma membrane"/>
    <property type="evidence" value="ECO:0007669"/>
    <property type="project" value="UniProtKB-SubCell"/>
</dbReference>
<dbReference type="GO" id="GO:0051991">
    <property type="term" value="F:UDP-N-acetyl-D-glucosamine:N-acetylmuramoyl-L-alanyl-D-glutamyl-meso-2,6-diaminopimelyl-D-alanyl-D-alanine-diphosphoundecaprenol 4-beta-N-acetylglucosaminlytransferase activity"/>
    <property type="evidence" value="ECO:0007669"/>
    <property type="project" value="RHEA"/>
</dbReference>
<dbReference type="GO" id="GO:0050511">
    <property type="term" value="F:undecaprenyldiphospho-muramoylpentapeptide beta-N-acetylglucosaminyltransferase activity"/>
    <property type="evidence" value="ECO:0007669"/>
    <property type="project" value="UniProtKB-UniRule"/>
</dbReference>
<dbReference type="GO" id="GO:0005975">
    <property type="term" value="P:carbohydrate metabolic process"/>
    <property type="evidence" value="ECO:0007669"/>
    <property type="project" value="InterPro"/>
</dbReference>
<dbReference type="GO" id="GO:0051301">
    <property type="term" value="P:cell division"/>
    <property type="evidence" value="ECO:0007669"/>
    <property type="project" value="UniProtKB-KW"/>
</dbReference>
<dbReference type="GO" id="GO:0071555">
    <property type="term" value="P:cell wall organization"/>
    <property type="evidence" value="ECO:0007669"/>
    <property type="project" value="UniProtKB-KW"/>
</dbReference>
<dbReference type="GO" id="GO:0030259">
    <property type="term" value="P:lipid glycosylation"/>
    <property type="evidence" value="ECO:0007669"/>
    <property type="project" value="UniProtKB-UniRule"/>
</dbReference>
<dbReference type="GO" id="GO:0009252">
    <property type="term" value="P:peptidoglycan biosynthetic process"/>
    <property type="evidence" value="ECO:0007669"/>
    <property type="project" value="UniProtKB-UniRule"/>
</dbReference>
<dbReference type="GO" id="GO:0008360">
    <property type="term" value="P:regulation of cell shape"/>
    <property type="evidence" value="ECO:0007669"/>
    <property type="project" value="UniProtKB-KW"/>
</dbReference>
<dbReference type="CDD" id="cd03785">
    <property type="entry name" value="GT28_MurG"/>
    <property type="match status" value="1"/>
</dbReference>
<dbReference type="Gene3D" id="3.40.50.2000">
    <property type="entry name" value="Glycogen Phosphorylase B"/>
    <property type="match status" value="2"/>
</dbReference>
<dbReference type="HAMAP" id="MF_00033">
    <property type="entry name" value="MurG"/>
    <property type="match status" value="1"/>
</dbReference>
<dbReference type="InterPro" id="IPR006009">
    <property type="entry name" value="GlcNAc_MurG"/>
</dbReference>
<dbReference type="InterPro" id="IPR007235">
    <property type="entry name" value="Glyco_trans_28_C"/>
</dbReference>
<dbReference type="InterPro" id="IPR004276">
    <property type="entry name" value="GlycoTrans_28_N"/>
</dbReference>
<dbReference type="NCBIfam" id="TIGR01133">
    <property type="entry name" value="murG"/>
    <property type="match status" value="1"/>
</dbReference>
<dbReference type="PANTHER" id="PTHR21015:SF22">
    <property type="entry name" value="GLYCOSYLTRANSFERASE"/>
    <property type="match status" value="1"/>
</dbReference>
<dbReference type="PANTHER" id="PTHR21015">
    <property type="entry name" value="UDP-N-ACETYLGLUCOSAMINE--N-ACETYLMURAMYL-(PENTAPEPTIDE) PYROPHOSPHORYL-UNDECAPRENOL N-ACETYLGLUCOSAMINE TRANSFERASE 1"/>
    <property type="match status" value="1"/>
</dbReference>
<dbReference type="Pfam" id="PF04101">
    <property type="entry name" value="Glyco_tran_28_C"/>
    <property type="match status" value="1"/>
</dbReference>
<dbReference type="Pfam" id="PF03033">
    <property type="entry name" value="Glyco_transf_28"/>
    <property type="match status" value="1"/>
</dbReference>
<dbReference type="SUPFAM" id="SSF53756">
    <property type="entry name" value="UDP-Glycosyltransferase/glycogen phosphorylase"/>
    <property type="match status" value="1"/>
</dbReference>
<comment type="function">
    <text evidence="1">Cell wall formation. Catalyzes the transfer of a GlcNAc subunit on undecaprenyl-pyrophosphoryl-MurNAc-pentapeptide (lipid intermediate I) to form undecaprenyl-pyrophosphoryl-MurNAc-(pentapeptide)GlcNAc (lipid intermediate II).</text>
</comment>
<comment type="catalytic activity">
    <reaction evidence="1">
        <text>di-trans,octa-cis-undecaprenyl diphospho-N-acetyl-alpha-D-muramoyl-L-alanyl-D-glutamyl-meso-2,6-diaminopimeloyl-D-alanyl-D-alanine + UDP-N-acetyl-alpha-D-glucosamine = di-trans,octa-cis-undecaprenyl diphospho-[N-acetyl-alpha-D-glucosaminyl-(1-&gt;4)]-N-acetyl-alpha-D-muramoyl-L-alanyl-D-glutamyl-meso-2,6-diaminopimeloyl-D-alanyl-D-alanine + UDP + H(+)</text>
        <dbReference type="Rhea" id="RHEA:31227"/>
        <dbReference type="ChEBI" id="CHEBI:15378"/>
        <dbReference type="ChEBI" id="CHEBI:57705"/>
        <dbReference type="ChEBI" id="CHEBI:58223"/>
        <dbReference type="ChEBI" id="CHEBI:61387"/>
        <dbReference type="ChEBI" id="CHEBI:61388"/>
        <dbReference type="EC" id="2.4.1.227"/>
    </reaction>
</comment>
<comment type="pathway">
    <text evidence="1">Cell wall biogenesis; peptidoglycan biosynthesis.</text>
</comment>
<comment type="subcellular location">
    <subcellularLocation>
        <location evidence="1">Cell inner membrane</location>
        <topology evidence="1">Peripheral membrane protein</topology>
        <orientation evidence="1">Cytoplasmic side</orientation>
    </subcellularLocation>
</comment>
<comment type="similarity">
    <text evidence="1">Belongs to the glycosyltransferase 28 family. MurG subfamily.</text>
</comment>
<name>MURG_CAMJR</name>
<proteinExistence type="inferred from homology"/>
<protein>
    <recommendedName>
        <fullName evidence="1">UDP-N-acetylglucosamine--N-acetylmuramyl-(pentapeptide) pyrophosphoryl-undecaprenol N-acetylglucosamine transferase</fullName>
        <ecNumber evidence="1">2.4.1.227</ecNumber>
    </recommendedName>
    <alternativeName>
        <fullName evidence="1">Undecaprenyl-PP-MurNAc-pentapeptide-UDPGlcNAc GlcNAc transferase</fullName>
    </alternativeName>
</protein>
<feature type="chain" id="PRO_0000225040" description="UDP-N-acetylglucosamine--N-acetylmuramyl-(pentapeptide) pyrophosphoryl-undecaprenol N-acetylglucosamine transferase">
    <location>
        <begin position="1"/>
        <end position="342"/>
    </location>
</feature>
<feature type="binding site" evidence="1">
    <location>
        <begin position="10"/>
        <end position="12"/>
    </location>
    <ligand>
        <name>UDP-N-acetyl-alpha-D-glucosamine</name>
        <dbReference type="ChEBI" id="CHEBI:57705"/>
    </ligand>
</feature>
<feature type="binding site" evidence="1">
    <location>
        <position position="124"/>
    </location>
    <ligand>
        <name>UDP-N-acetyl-alpha-D-glucosamine</name>
        <dbReference type="ChEBI" id="CHEBI:57705"/>
    </ligand>
</feature>
<feature type="binding site" evidence="1">
    <location>
        <position position="177"/>
    </location>
    <ligand>
        <name>UDP-N-acetyl-alpha-D-glucosamine</name>
        <dbReference type="ChEBI" id="CHEBI:57705"/>
    </ligand>
</feature>
<feature type="binding site" evidence="1">
    <location>
        <position position="275"/>
    </location>
    <ligand>
        <name>UDP-N-acetyl-alpha-D-glucosamine</name>
        <dbReference type="ChEBI" id="CHEBI:57705"/>
    </ligand>
</feature>
<reference key="1">
    <citation type="journal article" date="2005" name="PLoS Biol.">
        <title>Major structural differences and novel potential virulence mechanisms from the genomes of multiple Campylobacter species.</title>
        <authorList>
            <person name="Fouts D.E."/>
            <person name="Mongodin E.F."/>
            <person name="Mandrell R.E."/>
            <person name="Miller W.G."/>
            <person name="Rasko D.A."/>
            <person name="Ravel J."/>
            <person name="Brinkac L.M."/>
            <person name="DeBoy R.T."/>
            <person name="Parker C.T."/>
            <person name="Daugherty S.C."/>
            <person name="Dodson R.J."/>
            <person name="Durkin A.S."/>
            <person name="Madupu R."/>
            <person name="Sullivan S.A."/>
            <person name="Shetty J.U."/>
            <person name="Ayodeji M.A."/>
            <person name="Shvartsbeyn A."/>
            <person name="Schatz M.C."/>
            <person name="Badger J.H."/>
            <person name="Fraser C.M."/>
            <person name="Nelson K.E."/>
        </authorList>
    </citation>
    <scope>NUCLEOTIDE SEQUENCE [LARGE SCALE GENOMIC DNA]</scope>
    <source>
        <strain>RM1221</strain>
    </source>
</reference>
<organism>
    <name type="scientific">Campylobacter jejuni (strain RM1221)</name>
    <dbReference type="NCBI Taxonomy" id="195099"/>
    <lineage>
        <taxon>Bacteria</taxon>
        <taxon>Pseudomonadati</taxon>
        <taxon>Campylobacterota</taxon>
        <taxon>Epsilonproteobacteria</taxon>
        <taxon>Campylobacterales</taxon>
        <taxon>Campylobacteraceae</taxon>
        <taxon>Campylobacter</taxon>
    </lineage>
</organism>
<gene>
    <name evidence="1" type="primary">murG</name>
    <name type="ordered locus">CJE1183</name>
</gene>
<evidence type="ECO:0000255" key="1">
    <source>
        <dbReference type="HAMAP-Rule" id="MF_00033"/>
    </source>
</evidence>
<keyword id="KW-0131">Cell cycle</keyword>
<keyword id="KW-0132">Cell division</keyword>
<keyword id="KW-0997">Cell inner membrane</keyword>
<keyword id="KW-1003">Cell membrane</keyword>
<keyword id="KW-0133">Cell shape</keyword>
<keyword id="KW-0961">Cell wall biogenesis/degradation</keyword>
<keyword id="KW-0328">Glycosyltransferase</keyword>
<keyword id="KW-0472">Membrane</keyword>
<keyword id="KW-0573">Peptidoglycan synthesis</keyword>
<keyword id="KW-0808">Transferase</keyword>